<accession>Q39J35</accession>
<name>HBOH_BURL3</name>
<keyword id="KW-0378">Hydrolase</keyword>
<keyword id="KW-0964">Secreted</keyword>
<keyword id="KW-0732">Signal</keyword>
<protein>
    <recommendedName>
        <fullName evidence="1">D-(-)-3-hydroxybutyrate oligomer hydrolase</fullName>
        <shortName evidence="1">3HB-oligomer hydrolase</shortName>
        <shortName evidence="1">3HBOH</shortName>
        <ecNumber evidence="1">3.1.1.22</ecNumber>
    </recommendedName>
</protein>
<evidence type="ECO:0000255" key="1">
    <source>
        <dbReference type="HAMAP-Rule" id="MF_01906"/>
    </source>
</evidence>
<proteinExistence type="inferred from homology"/>
<reference key="1">
    <citation type="submission" date="2005-10" db="EMBL/GenBank/DDBJ databases">
        <title>Complete sequence of chromosome 1 of Burkholderia sp. 383.</title>
        <authorList>
            <consortium name="US DOE Joint Genome Institute"/>
            <person name="Copeland A."/>
            <person name="Lucas S."/>
            <person name="Lapidus A."/>
            <person name="Barry K."/>
            <person name="Detter J.C."/>
            <person name="Glavina T."/>
            <person name="Hammon N."/>
            <person name="Israni S."/>
            <person name="Pitluck S."/>
            <person name="Chain P."/>
            <person name="Malfatti S."/>
            <person name="Shin M."/>
            <person name="Vergez L."/>
            <person name="Schmutz J."/>
            <person name="Larimer F."/>
            <person name="Land M."/>
            <person name="Kyrpides N."/>
            <person name="Lykidis A."/>
            <person name="Richardson P."/>
        </authorList>
    </citation>
    <scope>NUCLEOTIDE SEQUENCE [LARGE SCALE GENOMIC DNA]</scope>
    <source>
        <strain>ATCC 17760 / DSM 23089 / LMG 22485 / NCIMB 9086 / R18194 / 383</strain>
    </source>
</reference>
<sequence length="696" mass="71763">MTRLGWGRRMVFGAALAAVAILGACNGDESAERNRLPGFVSGSVRTTAYDGASDDLLTAGLGKTGLGSASAPGFANAARPTSAELRRLAIWSNYRALVDMSANGGYGRFWGPNVDLDGNDTLGEGKIPGTEYLAYSDDGSGSKNVTLLVQVPAGFNPAQPCIVTATSSGSRGVYGAISAAGEWALKRGCAVAYNDKGGGNGAHELMSDTITLIDGTLANAVLAGTSSLFTANVTSGDLATFNSRFPNRYAFKHAHSQQNPEQDWGHVTLQSVEFAYWALNEQFGPLIDGSRHGVRYRAGDIMTIAASVSNGGGASLAAAEQDTRGWITAVVVGEPQINVRMAPNVVVRSGGQPVPSFGRPLADYATLANLLEPCAAASASLAGAPYLSALPVATTQSIRTQRCATLAAAGLVSGADTQSQAADALAQLHAAGYLADSDLLQAPMWDSQAIPAIAVTYANAYTRSRVTDNLCNFSFATTNPATGAVAAPATSPMPAVFGVGNGVPPTAGIDLVFNTGAGVDHRLATPDASFAGALCLRQLWTNGMLGMPANVDAVRVNANLQGKPAIIVQGRSDSLVPVNHASRAYVAQNGISEAGRSQLVFYEVTNGQHFDAFLPVPGFDTRFVPVHYYNLQALNLMWKHLKNGAPLPPSQVIRTVPRGGTPGAAPALTSANLPPISAAPGANAITVGAGAIDVPL</sequence>
<dbReference type="EC" id="3.1.1.22" evidence="1"/>
<dbReference type="EMBL" id="CP000151">
    <property type="protein sequence ID" value="ABB07531.1"/>
    <property type="molecule type" value="Genomic_DNA"/>
</dbReference>
<dbReference type="RefSeq" id="WP_011351114.1">
    <property type="nucleotide sequence ID" value="NC_007510.1"/>
</dbReference>
<dbReference type="GeneID" id="45093837"/>
<dbReference type="KEGG" id="bur:Bcep18194_A3932"/>
<dbReference type="PATRIC" id="fig|482957.22.peg.806"/>
<dbReference type="HOGENOM" id="CLU_420258_0_0_4"/>
<dbReference type="UniPathway" id="UPA00863"/>
<dbReference type="Proteomes" id="UP000002705">
    <property type="component" value="Chromosome 1"/>
</dbReference>
<dbReference type="GO" id="GO:0005615">
    <property type="term" value="C:extracellular space"/>
    <property type="evidence" value="ECO:0007669"/>
    <property type="project" value="InterPro"/>
</dbReference>
<dbReference type="GO" id="GO:0047989">
    <property type="term" value="F:hydroxybutyrate-dimer hydrolase activity"/>
    <property type="evidence" value="ECO:0007669"/>
    <property type="project" value="UniProtKB-UniRule"/>
</dbReference>
<dbReference type="GO" id="GO:0019605">
    <property type="term" value="P:butyrate metabolic process"/>
    <property type="evidence" value="ECO:0007669"/>
    <property type="project" value="UniProtKB-UniRule"/>
</dbReference>
<dbReference type="HAMAP" id="MF_01906">
    <property type="entry name" value="3HBOH"/>
    <property type="match status" value="1"/>
</dbReference>
<dbReference type="InterPro" id="IPR016582">
    <property type="entry name" value="OHBut_olig_hydro_put"/>
</dbReference>
<dbReference type="Pfam" id="PF10605">
    <property type="entry name" value="3HBOH"/>
    <property type="match status" value="1"/>
</dbReference>
<dbReference type="PIRSF" id="PIRSF011409">
    <property type="entry name" value="HObutyrate_olig_hydrol"/>
    <property type="match status" value="1"/>
</dbReference>
<feature type="signal peptide" evidence="1">
    <location>
        <begin position="1"/>
        <end position="20"/>
    </location>
</feature>
<feature type="chain" id="PRO_0000314425" description="D-(-)-3-hydroxybutyrate oligomer hydrolase">
    <location>
        <begin position="21"/>
        <end position="696"/>
    </location>
</feature>
<feature type="active site" description="Charge relay system" evidence="1">
    <location>
        <position position="309"/>
    </location>
</feature>
<comment type="function">
    <text evidence="1">Participates in the degradation of poly-3-hydroxybutyrate (PHB). It works downstream of poly(3-hydroxybutyrate) depolymerase, hydrolyzing D(-)-3-hydroxybutyrate oligomers of various length (3HB-oligomers) into 3HB-monomers.</text>
</comment>
<comment type="catalytic activity">
    <reaction evidence="1">
        <text>(3R)-hydroxybutanoate dimer + H2O = 2 (R)-3-hydroxybutanoate + H(+)</text>
        <dbReference type="Rhea" id="RHEA:10172"/>
        <dbReference type="ChEBI" id="CHEBI:10979"/>
        <dbReference type="ChEBI" id="CHEBI:10983"/>
        <dbReference type="ChEBI" id="CHEBI:15377"/>
        <dbReference type="ChEBI" id="CHEBI:15378"/>
        <dbReference type="EC" id="3.1.1.22"/>
    </reaction>
</comment>
<comment type="pathway">
    <text evidence="1">Lipid metabolism; butanoate metabolism.</text>
</comment>
<comment type="subcellular location">
    <subcellularLocation>
        <location evidence="1">Secreted</location>
    </subcellularLocation>
</comment>
<comment type="similarity">
    <text evidence="1">Belongs to the D-(-)-3-hydroxybutyrate oligomer hydrolase family.</text>
</comment>
<gene>
    <name type="ordered locus">Bcep18194_A3932</name>
</gene>
<organism>
    <name type="scientific">Burkholderia lata (strain ATCC 17760 / DSM 23089 / LMG 22485 / NCIMB 9086 / R18194 / 383)</name>
    <dbReference type="NCBI Taxonomy" id="482957"/>
    <lineage>
        <taxon>Bacteria</taxon>
        <taxon>Pseudomonadati</taxon>
        <taxon>Pseudomonadota</taxon>
        <taxon>Betaproteobacteria</taxon>
        <taxon>Burkholderiales</taxon>
        <taxon>Burkholderiaceae</taxon>
        <taxon>Burkholderia</taxon>
        <taxon>Burkholderia cepacia complex</taxon>
    </lineage>
</organism>